<comment type="function">
    <text evidence="1 3 5 6 7 10 11 12 14 15 16">K(+) channel that conducts voltage-dependent outward rectifying currents upon membrane depolarization. Voltage sensing is coupled to K(+) electrochemical gradient in an 'ion flux gating' mode where outward but not inward ion flow opens the gate (PubMed:11263999, PubMed:12724142, PubMed:14985088, PubMed:26919430, PubMed:28928238, PubMed:34032641, PubMed:36063992). Homo- and heterodimerizes to form functional channels with distinct regulatory and gating properties (PubMed:36063992). In pancreatic islets, conducts K(+) countercurrents for Ca(2+) release from the endoplasmic reticulum (ER) and regulates the frequency and duration of cytosolic Ca(2+) oscillations coupled to secretion of pancreatic hormones (PubMed:26239056, PubMed:28928238, PubMed:29402588, PubMed:34032641). In pancreatic beta cells, drives ER Ca(2+) efflux, which in turn activates Ca(2+)-dependent plasma membrane K(+) slow currents and cytosolic Ca(2+) influx, overall contributing to synchronous cytosolic Ca(2+) oscillations. Limits glucose-induced cytosolic Ca(2+) oscillations coupled to second-phase INS secretion (PubMed:26239056, PubMed:28928238, PubMed:34032641). Contributes to beta cell adaptation to acute inflammation by maintaining normal cytosolic Ca(2+) levels and INS secretion (By similarity). May regulate beta cell mitochondrial Ca(2+) levels either indirectly via ER Ca(2+) efflux or directly by hyperpolarizing the mitochondrial membrane potential. Limits mitochondrial Ca(2+) oscillations and ATP production involved in glucose homeostasis upon metabolic stress (By similarity). In pancreatic delta cells, limits Ca(2+)-induced Ca(2+)-release involved in somatostatin secretion and modulates islet paracrine signaling involved in glucagon secretion (PubMed:29402588). Permeable to other monovalent cations such as Rb(+) and Cs(+) (By similarity) (PubMed:26919430).</text>
</comment>
<comment type="catalytic activity">
    <reaction evidence="5 6 7 10 11 15 16">
        <text>K(+)(in) = K(+)(out)</text>
        <dbReference type="Rhea" id="RHEA:29463"/>
        <dbReference type="ChEBI" id="CHEBI:29103"/>
    </reaction>
</comment>
<comment type="catalytic activity">
    <reaction evidence="11">
        <text>Rb(+)(in) = Rb(+)(out)</text>
        <dbReference type="Rhea" id="RHEA:78547"/>
        <dbReference type="ChEBI" id="CHEBI:49847"/>
    </reaction>
</comment>
<comment type="catalytic activity">
    <reaction evidence="3">
        <text>Cs(+)(in) = Cs(+)(out)</text>
        <dbReference type="Rhea" id="RHEA:78555"/>
        <dbReference type="ChEBI" id="CHEBI:49547"/>
    </reaction>
</comment>
<comment type="activity regulation">
    <text evidence="5 6 7 16">The channel conductance is stimulated by extracellular alkaline pH. Inhibited by Ba(2+) ions, quinine, quinidine, chloroform and halothane.</text>
</comment>
<comment type="biophysicochemical properties">
    <phDependence>
        <text evidence="7 16">The homodimer is gated open at pH &gt; 6. The heterodimer with KCNK16 or KCNK17 is gated open at physiological pH range 7-8 and increases current conductance at alkaline pH without apparent saturation.</text>
    </phDependence>
</comment>
<comment type="subunit">
    <text evidence="16">Homodimer; disulfide-linked. Heterodimer with KCNK17 and KCNK5.</text>
</comment>
<comment type="interaction">
    <interactant intactId="EBI-10294109">
        <id>Q96T55</id>
    </interactant>
    <interactant intactId="EBI-740446">
        <id>P32242</id>
        <label>OTX1</label>
    </interactant>
    <organismsDiffer>false</organismsDiffer>
    <experiments>3</experiments>
</comment>
<comment type="subcellular location">
    <molecule>Isoform a</molecule>
    <subcellularLocation>
        <location evidence="12">Endoplasmic reticulum membrane</location>
        <topology evidence="4">Multi-pass membrane protein</topology>
    </subcellularLocation>
    <subcellularLocation>
        <location evidence="10">Cell membrane</location>
        <topology evidence="4">Multi-pass membrane protein</topology>
    </subcellularLocation>
</comment>
<comment type="subcellular location">
    <molecule>Isoform b</molecule>
    <subcellularLocation>
        <location evidence="12 23">Endoplasmic reticulum membrane</location>
        <topology evidence="4">Multi-pass membrane protein</topology>
    </subcellularLocation>
    <subcellularLocation>
        <location evidence="23">Mitochondrion inner membrane</location>
        <topology evidence="4">Multi-pass membrane protein</topology>
    </subcellularLocation>
</comment>
<comment type="alternative products">
    <event type="alternative splicing"/>
    <isoform>
        <id>Q96T55-1</id>
        <name>a</name>
        <sequence type="displayed"/>
    </isoform>
    <isoform>
        <id>Q96T55-3</id>
        <name>b</name>
        <sequence type="described" ref="VSP_039865"/>
    </isoform>
    <isoform>
        <id>Q96T55-4</id>
        <name>c</name>
        <sequence type="described" ref="VSP_039863"/>
    </isoform>
    <isoform>
        <id>Q96T55-5</id>
        <name>d</name>
        <sequence type="described" ref="VSP_039864"/>
    </isoform>
</comment>
<comment type="tissue specificity">
    <text evidence="5 6 8 10 12 14 16">Highly expressed in pancreas, in both endocrine (alpha, beta, gamma, delta, and epsilon) and exocrine (acinar and ductal) cells. Expressed in pacreatic beta-cells (at protein level). Expressed in pacreatic delta-cells (at protein level). Not detectable in the other tissues tested.</text>
</comment>
<comment type="induction">
    <text evidence="13">Down-regulated when pancreatic islets are exposed to a cytokine mixture of TNF, IL1B and IFNG.</text>
</comment>
<comment type="domain">
    <text evidence="2">The pore-forming domains 1 and 2 assemble to form a single pore in which M2 and M4 transmembrane helices line the central cavity and M1 and M3 face the lipid bilayer. The transmembrane helices are bridged by the selectivity filters 1 and 2 carrying a signature sequence TxTTxGYGD that coordinate the permeant ions. Up to four ions can simultaneously occupy the selectivity filter and at least two elementary charges must translocate across the filter to convert it into the open conformation.</text>
</comment>
<comment type="similarity">
    <text evidence="22">Belongs to the two pore domain potassium channel (TC 1.A.1.8) family.</text>
</comment>
<proteinExistence type="evidence at protein level"/>
<name>KCNKG_HUMAN</name>
<keyword id="KW-0025">Alternative splicing</keyword>
<keyword id="KW-1003">Cell membrane</keyword>
<keyword id="KW-1015">Disulfide bond</keyword>
<keyword id="KW-0256">Endoplasmic reticulum</keyword>
<keyword id="KW-0407">Ion channel</keyword>
<keyword id="KW-0406">Ion transport</keyword>
<keyword id="KW-0472">Membrane</keyword>
<keyword id="KW-0479">Metal-binding</keyword>
<keyword id="KW-0496">Mitochondrion</keyword>
<keyword id="KW-0999">Mitochondrion inner membrane</keyword>
<keyword id="KW-0630">Potassium</keyword>
<keyword id="KW-0631">Potassium channel</keyword>
<keyword id="KW-0633">Potassium transport</keyword>
<keyword id="KW-1185">Reference proteome</keyword>
<keyword id="KW-0812">Transmembrane</keyword>
<keyword id="KW-1133">Transmembrane helix</keyword>
<keyword id="KW-0813">Transport</keyword>
<keyword id="KW-0851">Voltage-gated channel</keyword>
<sequence>MPSAGLCSCWGGRVLPLLLAYVCYLLLGATIFQLLERQAEAQSRDQFQLEKLRFLENYTCLDQWAMEQFVQVIMEAWVKGVNPKGNSTNPSNWDFGSSFFFAGTVVTTIGYGNLAPSTEAGQVFCVFYALLGIPLNVIFLNHLGTGLRAHLAAIERWEDRPRRSQVLQVLGLALFLTLGTLVILIFPPMVFSHVEGWSFSEGFYFAFITLSTIGFGDYVVGTDPSKHYISVYRSLAAIWILLGLAWLALILPLGPLLLHRCCQLWLLSLRQGCGAKAAPGRRPRRGSTAARGVQVTPQDFPISKKGLGS</sequence>
<evidence type="ECO:0000250" key="1">
    <source>
        <dbReference type="UniProtKB" id="G5E845"/>
    </source>
</evidence>
<evidence type="ECO:0000250" key="2">
    <source>
        <dbReference type="UniProtKB" id="P57789"/>
    </source>
</evidence>
<evidence type="ECO:0000250" key="3">
    <source>
        <dbReference type="UniProtKB" id="Q96T54"/>
    </source>
</evidence>
<evidence type="ECO:0000255" key="4"/>
<evidence type="ECO:0000269" key="5">
    <source>
    </source>
</evidence>
<evidence type="ECO:0000269" key="6">
    <source>
    </source>
</evidence>
<evidence type="ECO:0000269" key="7">
    <source>
    </source>
</evidence>
<evidence type="ECO:0000269" key="8">
    <source>
    </source>
</evidence>
<evidence type="ECO:0000269" key="9">
    <source>
    </source>
</evidence>
<evidence type="ECO:0000269" key="10">
    <source>
    </source>
</evidence>
<evidence type="ECO:0000269" key="11">
    <source>
    </source>
</evidence>
<evidence type="ECO:0000269" key="12">
    <source>
    </source>
</evidence>
<evidence type="ECO:0000269" key="13">
    <source>
    </source>
</evidence>
<evidence type="ECO:0000269" key="14">
    <source>
    </source>
</evidence>
<evidence type="ECO:0000269" key="15">
    <source>
    </source>
</evidence>
<evidence type="ECO:0000269" key="16">
    <source>
    </source>
</evidence>
<evidence type="ECO:0000269" key="17">
    <source ref="5"/>
</evidence>
<evidence type="ECO:0000303" key="18">
    <source>
    </source>
</evidence>
<evidence type="ECO:0000303" key="19">
    <source>
    </source>
</evidence>
<evidence type="ECO:0000303" key="20">
    <source>
    </source>
</evidence>
<evidence type="ECO:0000303" key="21">
    <source>
    </source>
</evidence>
<evidence type="ECO:0000305" key="22"/>
<evidence type="ECO:0000305" key="23">
    <source>
    </source>
</evidence>
<evidence type="ECO:0000312" key="24">
    <source>
        <dbReference type="HGNC" id="HGNC:14464"/>
    </source>
</evidence>
<gene>
    <name evidence="21 24" type="primary">KCNK16</name>
    <name type="synonym">TALK1</name>
</gene>
<dbReference type="EMBL" id="AF358909">
    <property type="protein sequence ID" value="AAK49532.1"/>
    <property type="molecule type" value="mRNA"/>
</dbReference>
<dbReference type="EMBL" id="AY253145">
    <property type="protein sequence ID" value="AAP82866.1"/>
    <property type="molecule type" value="mRNA"/>
</dbReference>
<dbReference type="EMBL" id="AY253146">
    <property type="protein sequence ID" value="AAP82867.1"/>
    <property type="molecule type" value="mRNA"/>
</dbReference>
<dbReference type="EMBL" id="AY253147">
    <property type="protein sequence ID" value="AAP82868.1"/>
    <property type="molecule type" value="mRNA"/>
</dbReference>
<dbReference type="EMBL" id="EU978943">
    <property type="protein sequence ID" value="ACH86102.1"/>
    <property type="molecule type" value="mRNA"/>
</dbReference>
<dbReference type="EMBL" id="AL136087">
    <property type="status" value="NOT_ANNOTATED_CDS"/>
    <property type="molecule type" value="Genomic_DNA"/>
</dbReference>
<dbReference type="EMBL" id="CH471081">
    <property type="protein sequence ID" value="EAX03982.1"/>
    <property type="molecule type" value="Genomic_DNA"/>
</dbReference>
<dbReference type="EMBL" id="CH471081">
    <property type="protein sequence ID" value="EAX03984.1"/>
    <property type="molecule type" value="Genomic_DNA"/>
</dbReference>
<dbReference type="EMBL" id="CH471081">
    <property type="protein sequence ID" value="EAX03985.1"/>
    <property type="molecule type" value="Genomic_DNA"/>
</dbReference>
<dbReference type="EMBL" id="BC111860">
    <property type="protein sequence ID" value="AAI11861.1"/>
    <property type="molecule type" value="mRNA"/>
</dbReference>
<dbReference type="CCDS" id="CCDS47420.1">
    <molecule id="Q96T55-5"/>
</dbReference>
<dbReference type="CCDS" id="CCDS47421.1">
    <molecule id="Q96T55-4"/>
</dbReference>
<dbReference type="CCDS" id="CCDS47422.1">
    <molecule id="Q96T55-3"/>
</dbReference>
<dbReference type="CCDS" id="CCDS4843.1">
    <molecule id="Q96T55-1"/>
</dbReference>
<dbReference type="RefSeq" id="NP_001128577.1">
    <molecule id="Q96T55-4"/>
    <property type="nucleotide sequence ID" value="NM_001135105.2"/>
</dbReference>
<dbReference type="RefSeq" id="NP_001128578.1">
    <molecule id="Q96T55-3"/>
    <property type="nucleotide sequence ID" value="NM_001135106.2"/>
</dbReference>
<dbReference type="RefSeq" id="NP_001128579.1">
    <molecule id="Q96T55-5"/>
    <property type="nucleotide sequence ID" value="NM_001135107.2"/>
</dbReference>
<dbReference type="RefSeq" id="NP_115491.1">
    <molecule id="Q96T55-1"/>
    <property type="nucleotide sequence ID" value="NM_032115.4"/>
</dbReference>
<dbReference type="RefSeq" id="XP_016866835.1">
    <molecule id="Q96T55-5"/>
    <property type="nucleotide sequence ID" value="XM_017011346.2"/>
</dbReference>
<dbReference type="SMR" id="Q96T55"/>
<dbReference type="BioGRID" id="123763">
    <property type="interactions" value="46"/>
</dbReference>
<dbReference type="FunCoup" id="Q96T55">
    <property type="interactions" value="72"/>
</dbReference>
<dbReference type="IntAct" id="Q96T55">
    <property type="interactions" value="32"/>
</dbReference>
<dbReference type="STRING" id="9606.ENSP00000391498"/>
<dbReference type="TCDB" id="1.A.1.9.10">
    <property type="family name" value="the voltage-gated ion channel (vic) superfamily"/>
</dbReference>
<dbReference type="iPTMnet" id="Q96T55"/>
<dbReference type="PhosphoSitePlus" id="Q96T55"/>
<dbReference type="BioMuta" id="KCNK16"/>
<dbReference type="DMDM" id="24636281"/>
<dbReference type="MassIVE" id="Q96T55"/>
<dbReference type="PaxDb" id="9606-ENSP00000391498"/>
<dbReference type="ProteomicsDB" id="78192">
    <molecule id="Q96T55-1"/>
</dbReference>
<dbReference type="ProteomicsDB" id="78193">
    <molecule id="Q96T55-3"/>
</dbReference>
<dbReference type="ProteomicsDB" id="78194">
    <molecule id="Q96T55-4"/>
</dbReference>
<dbReference type="ProteomicsDB" id="78195">
    <molecule id="Q96T55-5"/>
</dbReference>
<dbReference type="Antibodypedia" id="15706">
    <property type="antibodies" value="37 antibodies from 12 providers"/>
</dbReference>
<dbReference type="DNASU" id="83795"/>
<dbReference type="Ensembl" id="ENST00000373227.8">
    <molecule id="Q96T55-5"/>
    <property type="protein sequence ID" value="ENSP00000362324.4"/>
    <property type="gene ID" value="ENSG00000095981.11"/>
</dbReference>
<dbReference type="Ensembl" id="ENST00000373229.9">
    <molecule id="Q96T55-1"/>
    <property type="protein sequence ID" value="ENSP00000362326.5"/>
    <property type="gene ID" value="ENSG00000095981.11"/>
</dbReference>
<dbReference type="Ensembl" id="ENST00000425054.6">
    <molecule id="Q96T55-4"/>
    <property type="protein sequence ID" value="ENSP00000391498.2"/>
    <property type="gene ID" value="ENSG00000095981.11"/>
</dbReference>
<dbReference type="Ensembl" id="ENST00000437525.3">
    <molecule id="Q96T55-3"/>
    <property type="protein sequence ID" value="ENSP00000415375.2"/>
    <property type="gene ID" value="ENSG00000095981.11"/>
</dbReference>
<dbReference type="GeneID" id="83795"/>
<dbReference type="KEGG" id="hsa:83795"/>
<dbReference type="MANE-Select" id="ENST00000437525.3">
    <molecule id="Q96T55-3"/>
    <property type="protein sequence ID" value="ENSP00000415375.2"/>
    <property type="RefSeq nucleotide sequence ID" value="NM_001135106.2"/>
    <property type="RefSeq protein sequence ID" value="NP_001128578.1"/>
</dbReference>
<dbReference type="UCSC" id="uc003ooq.3">
    <molecule id="Q96T55-1"/>
    <property type="organism name" value="human"/>
</dbReference>
<dbReference type="AGR" id="HGNC:14464"/>
<dbReference type="CTD" id="83795"/>
<dbReference type="DisGeNET" id="83795"/>
<dbReference type="GeneCards" id="KCNK16"/>
<dbReference type="HGNC" id="HGNC:14464">
    <property type="gene designation" value="KCNK16"/>
</dbReference>
<dbReference type="HPA" id="ENSG00000095981">
    <property type="expression patterns" value="Group enriched (pancreas, stomach)"/>
</dbReference>
<dbReference type="MIM" id="607369">
    <property type="type" value="gene"/>
</dbReference>
<dbReference type="neXtProt" id="NX_Q96T55"/>
<dbReference type="OpenTargets" id="ENSG00000095981"/>
<dbReference type="PharmGKB" id="PA30057"/>
<dbReference type="VEuPathDB" id="HostDB:ENSG00000095981"/>
<dbReference type="eggNOG" id="KOG1418">
    <property type="taxonomic scope" value="Eukaryota"/>
</dbReference>
<dbReference type="GeneTree" id="ENSGT00940000159813"/>
<dbReference type="HOGENOM" id="CLU_022504_6_0_1"/>
<dbReference type="InParanoid" id="Q96T55"/>
<dbReference type="OMA" id="WLALIFN"/>
<dbReference type="OrthoDB" id="297496at2759"/>
<dbReference type="PAN-GO" id="Q96T55">
    <property type="GO annotations" value="5 GO annotations based on evolutionary models"/>
</dbReference>
<dbReference type="PhylomeDB" id="Q96T55"/>
<dbReference type="TreeFam" id="TF313947"/>
<dbReference type="PathwayCommons" id="Q96T55"/>
<dbReference type="Reactome" id="R-HSA-1299361">
    <property type="pathway name" value="TWIK-related alkaline pH activated K+ channel (TALK)"/>
</dbReference>
<dbReference type="Reactome" id="R-HSA-5576886">
    <property type="pathway name" value="Phase 4 - resting membrane potential"/>
</dbReference>
<dbReference type="SignaLink" id="Q96T55"/>
<dbReference type="BioGRID-ORCS" id="83795">
    <property type="hits" value="26 hits in 1140 CRISPR screens"/>
</dbReference>
<dbReference type="GeneWiki" id="KCNK16"/>
<dbReference type="GenomeRNAi" id="83795"/>
<dbReference type="Pharos" id="Q96T55">
    <property type="development level" value="Tbio"/>
</dbReference>
<dbReference type="PRO" id="PR:Q96T55"/>
<dbReference type="Proteomes" id="UP000005640">
    <property type="component" value="Chromosome 6"/>
</dbReference>
<dbReference type="RNAct" id="Q96T55">
    <property type="molecule type" value="protein"/>
</dbReference>
<dbReference type="Bgee" id="ENSG00000095981">
    <property type="expression patterns" value="Expressed in islet of Langerhans and 32 other cell types or tissues"/>
</dbReference>
<dbReference type="ExpressionAtlas" id="Q96T55">
    <property type="expression patterns" value="baseline and differential"/>
</dbReference>
<dbReference type="GO" id="GO:0005789">
    <property type="term" value="C:endoplasmic reticulum membrane"/>
    <property type="evidence" value="ECO:0000314"/>
    <property type="project" value="UniProtKB"/>
</dbReference>
<dbReference type="GO" id="GO:0005743">
    <property type="term" value="C:mitochondrial inner membrane"/>
    <property type="evidence" value="ECO:0007669"/>
    <property type="project" value="UniProtKB-SubCell"/>
</dbReference>
<dbReference type="GO" id="GO:0034702">
    <property type="term" value="C:monoatomic ion channel complex"/>
    <property type="evidence" value="ECO:0007669"/>
    <property type="project" value="UniProtKB-KW"/>
</dbReference>
<dbReference type="GO" id="GO:0005886">
    <property type="term" value="C:plasma membrane"/>
    <property type="evidence" value="ECO:0000318"/>
    <property type="project" value="GO_Central"/>
</dbReference>
<dbReference type="GO" id="GO:0042802">
    <property type="term" value="F:identical protein binding"/>
    <property type="evidence" value="ECO:0000314"/>
    <property type="project" value="UniProtKB"/>
</dbReference>
<dbReference type="GO" id="GO:0046872">
    <property type="term" value="F:metal ion binding"/>
    <property type="evidence" value="ECO:0007669"/>
    <property type="project" value="UniProtKB-KW"/>
</dbReference>
<dbReference type="GO" id="GO:0015271">
    <property type="term" value="F:outward rectifier potassium channel activity"/>
    <property type="evidence" value="ECO:0000314"/>
    <property type="project" value="UniProtKB"/>
</dbReference>
<dbReference type="GO" id="GO:0005267">
    <property type="term" value="F:potassium channel activity"/>
    <property type="evidence" value="ECO:0000314"/>
    <property type="project" value="UniProtKB"/>
</dbReference>
<dbReference type="GO" id="GO:0022841">
    <property type="term" value="F:potassium ion leak channel activity"/>
    <property type="evidence" value="ECO:0000318"/>
    <property type="project" value="GO_Central"/>
</dbReference>
<dbReference type="GO" id="GO:0046982">
    <property type="term" value="F:protein heterodimerization activity"/>
    <property type="evidence" value="ECO:0000314"/>
    <property type="project" value="UniProtKB"/>
</dbReference>
<dbReference type="GO" id="GO:0032469">
    <property type="term" value="P:endoplasmic reticulum calcium ion homeostasis"/>
    <property type="evidence" value="ECO:0000315"/>
    <property type="project" value="UniProtKB"/>
</dbReference>
<dbReference type="GO" id="GO:0086011">
    <property type="term" value="P:membrane repolarization during action potential"/>
    <property type="evidence" value="ECO:0000250"/>
    <property type="project" value="UniProtKB"/>
</dbReference>
<dbReference type="GO" id="GO:0071805">
    <property type="term" value="P:potassium ion transmembrane transport"/>
    <property type="evidence" value="ECO:0000318"/>
    <property type="project" value="GO_Central"/>
</dbReference>
<dbReference type="GO" id="GO:0006813">
    <property type="term" value="P:potassium ion transport"/>
    <property type="evidence" value="ECO:0000314"/>
    <property type="project" value="MGI"/>
</dbReference>
<dbReference type="GO" id="GO:0098900">
    <property type="term" value="P:regulation of action potential"/>
    <property type="evidence" value="ECO:0000315"/>
    <property type="project" value="UniProtKB"/>
</dbReference>
<dbReference type="GO" id="GO:0061178">
    <property type="term" value="P:regulation of insulin secretion involved in cellular response to glucose stimulus"/>
    <property type="evidence" value="ECO:0000250"/>
    <property type="project" value="UniProtKB"/>
</dbReference>
<dbReference type="GO" id="GO:0051279">
    <property type="term" value="P:regulation of release of sequestered calcium ion into cytosol"/>
    <property type="evidence" value="ECO:0000315"/>
    <property type="project" value="UniProtKB"/>
</dbReference>
<dbReference type="FunFam" id="1.10.287.70:FF:000098">
    <property type="entry name" value="Potassium two pore domain channel subfamily K member 16"/>
    <property type="match status" value="1"/>
</dbReference>
<dbReference type="Gene3D" id="1.10.287.70">
    <property type="match status" value="1"/>
</dbReference>
<dbReference type="InterPro" id="IPR003280">
    <property type="entry name" value="2pore_dom_K_chnl"/>
</dbReference>
<dbReference type="InterPro" id="IPR003092">
    <property type="entry name" value="2pore_dom_K_chnl_TASK"/>
</dbReference>
<dbReference type="InterPro" id="IPR013099">
    <property type="entry name" value="K_chnl_dom"/>
</dbReference>
<dbReference type="PANTHER" id="PTHR11003:SF104">
    <property type="entry name" value="POTASSIUM CHANNEL SUBFAMILY K MEMBER 16"/>
    <property type="match status" value="1"/>
</dbReference>
<dbReference type="PANTHER" id="PTHR11003">
    <property type="entry name" value="POTASSIUM CHANNEL, SUBFAMILY K"/>
    <property type="match status" value="1"/>
</dbReference>
<dbReference type="Pfam" id="PF07885">
    <property type="entry name" value="Ion_trans_2"/>
    <property type="match status" value="2"/>
</dbReference>
<dbReference type="PRINTS" id="PR01333">
    <property type="entry name" value="2POREKCHANEL"/>
</dbReference>
<dbReference type="PRINTS" id="PR01095">
    <property type="entry name" value="TASKCHANNEL"/>
</dbReference>
<dbReference type="SUPFAM" id="SSF81324">
    <property type="entry name" value="Voltage-gated potassium channels"/>
    <property type="match status" value="2"/>
</dbReference>
<protein>
    <recommendedName>
        <fullName>Potassium channel subfamily K member 16</fullName>
    </recommendedName>
    <alternativeName>
        <fullName>2P domain potassium channel Talk-1</fullName>
    </alternativeName>
    <alternativeName>
        <fullName>TWIK-related alkaline pH-activated K(+) channel 1</fullName>
        <shortName evidence="18">TALK-1</shortName>
    </alternativeName>
</protein>
<accession>Q96T55</accession>
<accession>B5TJL9</accession>
<accession>Q2M2N9</accession>
<accession>Q5TCF3</accession>
<accession>Q6X6Z3</accession>
<accession>Q6X6Z4</accession>
<accession>Q6X6Z5</accession>
<accession>Q9H591</accession>
<organism>
    <name type="scientific">Homo sapiens</name>
    <name type="common">Human</name>
    <dbReference type="NCBI Taxonomy" id="9606"/>
    <lineage>
        <taxon>Eukaryota</taxon>
        <taxon>Metazoa</taxon>
        <taxon>Chordata</taxon>
        <taxon>Craniata</taxon>
        <taxon>Vertebrata</taxon>
        <taxon>Euteleostomi</taxon>
        <taxon>Mammalia</taxon>
        <taxon>Eutheria</taxon>
        <taxon>Euarchontoglires</taxon>
        <taxon>Primates</taxon>
        <taxon>Haplorrhini</taxon>
        <taxon>Catarrhini</taxon>
        <taxon>Hominidae</taxon>
        <taxon>Homo</taxon>
    </lineage>
</organism>
<feature type="chain" id="PRO_0000101767" description="Potassium channel subfamily K member 16">
    <location>
        <begin position="1"/>
        <end position="309"/>
    </location>
</feature>
<feature type="topological domain" description="Cytoplasmic" evidence="4">
    <location>
        <begin position="1"/>
        <end position="13"/>
    </location>
</feature>
<feature type="transmembrane region" description="Helical" evidence="4">
    <location>
        <begin position="14"/>
        <end position="34"/>
    </location>
</feature>
<feature type="intramembrane region" description="Pore-forming; Name=Pore-forming 1" evidence="4">
    <location>
        <begin position="98"/>
        <end position="116"/>
    </location>
</feature>
<feature type="transmembrane region" description="Helical" evidence="4">
    <location>
        <begin position="120"/>
        <end position="140"/>
    </location>
</feature>
<feature type="topological domain" description="Cytoplasmic" evidence="4">
    <location>
        <begin position="141"/>
        <end position="165"/>
    </location>
</feature>
<feature type="transmembrane region" description="Helical" evidence="4">
    <location>
        <begin position="166"/>
        <end position="186"/>
    </location>
</feature>
<feature type="intramembrane region" description="Pore-forming; Name=Pore-forming 2" evidence="4">
    <location>
        <begin position="202"/>
        <end position="221"/>
    </location>
</feature>
<feature type="transmembrane region" description="Helical" evidence="4">
    <location>
        <begin position="238"/>
        <end position="258"/>
    </location>
</feature>
<feature type="topological domain" description="Cytoplasmic" evidence="4">
    <location>
        <begin position="259"/>
        <end position="309"/>
    </location>
</feature>
<feature type="region of interest" description="Selectivity filter 1" evidence="2">
    <location>
        <begin position="108"/>
        <end position="113"/>
    </location>
</feature>
<feature type="region of interest" description="Selectivity filter 2" evidence="2">
    <location>
        <begin position="212"/>
        <end position="217"/>
    </location>
</feature>
<feature type="binding site" evidence="2">
    <location>
        <position position="108"/>
    </location>
    <ligand>
        <name>K(+)</name>
        <dbReference type="ChEBI" id="CHEBI:29103"/>
        <label>1</label>
    </ligand>
</feature>
<feature type="binding site" evidence="2">
    <location>
        <position position="108"/>
    </location>
    <ligand>
        <name>K(+)</name>
        <dbReference type="ChEBI" id="CHEBI:29103"/>
        <label>4</label>
    </ligand>
</feature>
<feature type="binding site" evidence="2">
    <location>
        <position position="109"/>
    </location>
    <ligand>
        <name>K(+)</name>
        <dbReference type="ChEBI" id="CHEBI:29103"/>
        <label>1</label>
    </ligand>
</feature>
<feature type="binding site" evidence="2">
    <location>
        <position position="109"/>
    </location>
    <ligand>
        <name>K(+)</name>
        <dbReference type="ChEBI" id="CHEBI:29103"/>
        <label>2</label>
    </ligand>
</feature>
<feature type="binding site" evidence="2">
    <location>
        <position position="110"/>
    </location>
    <ligand>
        <name>K(+)</name>
        <dbReference type="ChEBI" id="CHEBI:29103"/>
        <label>2</label>
    </ligand>
</feature>
<feature type="binding site" evidence="2">
    <location>
        <position position="110"/>
    </location>
    <ligand>
        <name>K(+)</name>
        <dbReference type="ChEBI" id="CHEBI:29103"/>
        <label>3</label>
    </ligand>
</feature>
<feature type="binding site" evidence="2">
    <location>
        <position position="111"/>
    </location>
    <ligand>
        <name>K(+)</name>
        <dbReference type="ChEBI" id="CHEBI:29103"/>
        <label>3</label>
    </ligand>
</feature>
<feature type="binding site" evidence="2">
    <location>
        <position position="212"/>
    </location>
    <ligand>
        <name>K(+)</name>
        <dbReference type="ChEBI" id="CHEBI:29103"/>
        <label>1</label>
    </ligand>
</feature>
<feature type="binding site" evidence="2">
    <location>
        <position position="212"/>
    </location>
    <ligand>
        <name>K(+)</name>
        <dbReference type="ChEBI" id="CHEBI:29103"/>
        <label>4</label>
    </ligand>
</feature>
<feature type="binding site" evidence="2">
    <location>
        <position position="213"/>
    </location>
    <ligand>
        <name>K(+)</name>
        <dbReference type="ChEBI" id="CHEBI:29103"/>
        <label>1</label>
    </ligand>
</feature>
<feature type="binding site" evidence="2">
    <location>
        <position position="213"/>
    </location>
    <ligand>
        <name>K(+)</name>
        <dbReference type="ChEBI" id="CHEBI:29103"/>
        <label>2</label>
    </ligand>
</feature>
<feature type="binding site" evidence="2">
    <location>
        <position position="214"/>
    </location>
    <ligand>
        <name>K(+)</name>
        <dbReference type="ChEBI" id="CHEBI:29103"/>
        <label>2</label>
    </ligand>
</feature>
<feature type="binding site" evidence="2">
    <location>
        <position position="214"/>
    </location>
    <ligand>
        <name>K(+)</name>
        <dbReference type="ChEBI" id="CHEBI:29103"/>
        <label>3</label>
    </ligand>
</feature>
<feature type="binding site" evidence="2">
    <location>
        <position position="215"/>
    </location>
    <ligand>
        <name>K(+)</name>
        <dbReference type="ChEBI" id="CHEBI:29103"/>
        <label>3</label>
    </ligand>
</feature>
<feature type="disulfide bond" description="Interchain (with C-60)" evidence="2">
    <location>
        <position position="60"/>
    </location>
</feature>
<feature type="splice variant" id="VSP_039863" description="In isoform c." evidence="18 19">
    <original>TDPSKHYISVYRSLAAIWILLGLAWLALILPLGPLLLHRCCQLWLLSLRQGCGAKAAPGRRPRRGSTAARGVQVTPQDFPISKKGLGS</original>
    <variation>HPLNFITPSGLLPSQEPFQTPHGKPESQQIPGSFQKVSSMNVWPLSGMHSPGLAFPLPDCNIPDQERFRPLHPGAWKFWPLPLPSSNSKWAPMWLGSSAQV</variation>
    <location>
        <begin position="222"/>
        <end position="309"/>
    </location>
</feature>
<feature type="splice variant" id="VSP_039864" description="In isoform d." evidence="18">
    <location>
        <begin position="222"/>
        <end position="268"/>
    </location>
</feature>
<feature type="splice variant" id="VSP_039865" description="In isoform b." evidence="18 20">
    <original>LRQGCGAKAAPGRRPRRGSTAARGVQVTPQDFPISKKGLGS</original>
    <variation>RGLGVKDGAASDPSGLPRPQKIPISA</variation>
    <location>
        <begin position="269"/>
        <end position="309"/>
    </location>
</feature>
<feature type="sequence variant" id="VAR_089732" description="Found in a patient with maturity-onset diabetes of the young (MODY); retains K(+) channel selectivity; displays increased K(+) current amplitude and channel open probability; results in increased beta cell membrane hyperpolarization that blunts glucose-induced Ca(2+) influx, action potential firing and INS secretion." evidence="15">
    <original>L</original>
    <variation>P</variation>
    <location>
        <position position="114"/>
    </location>
</feature>
<feature type="sequence variant" id="VAR_063636" description="In dbSNP:rs9462527.">
    <original>F</original>
    <variation>L</variation>
    <location>
        <position position="215"/>
    </location>
</feature>
<feature type="sequence variant" id="VAR_063637" description="In dbSNP:rs1535500.">
    <original>A</original>
    <variation>G</variation>
    <location>
        <position position="275"/>
    </location>
</feature>
<feature type="sequence variant" id="VAR_089733" description="Gain of function associated with an increased risk for type 2 diabetes in individuals of east Asian ancestry; displays increased localization at the plasma membrane and increased channel open probability; results in markedly increased ER Ca(2+) leak and ATF6 transcription factor activity in response to metabolic stress; dbSNP:rs1535500." evidence="9 10 12">
    <original>A</original>
    <variation>E</variation>
    <location>
        <position position="277"/>
    </location>
</feature>
<feature type="sequence variant" id="VAR_052430" description="In dbSNP:rs11756091." evidence="6 17">
    <original>P</original>
    <variation>H</variation>
    <location>
        <position position="301"/>
    </location>
</feature>
<feature type="mutagenesis site" description="Acts as a dominant negative when it assembles with wild-type KCNK16, KCNK17 and KCNK5 subunits, disrupting the channel K(+) selectivity filter and abolishing K(+) flux. Results in enhanced Ca(2+) levels in the ER stores." evidence="10 12 16">
    <original>G</original>
    <variation>E</variation>
    <location>
        <position position="110"/>
    </location>
</feature>
<feature type="sequence conflict" description="In Ref. 2; AAP82866." evidence="22" ref="2">
    <original>L</original>
    <variation>S</variation>
    <location>
        <position position="49"/>
    </location>
</feature>
<feature type="sequence conflict" description="In Ref. 2; AAP82867." evidence="22" ref="2">
    <original>A</original>
    <variation>V</variation>
    <location>
        <position position="149"/>
    </location>
</feature>
<feature type="sequence conflict" description="In Ref. 2; AAP82866." evidence="22" ref="2">
    <original>S</original>
    <variation>G</variation>
    <location>
        <position position="200"/>
    </location>
</feature>
<feature type="sequence conflict" description="In Ref. 2; AAP82867." evidence="22" ref="2">
    <original>FAF</original>
    <variation>LLS</variation>
    <location>
        <begin position="205"/>
        <end position="207"/>
    </location>
</feature>
<reference key="1">
    <citation type="journal article" date="2001" name="Biochem. Biophys. Res. Commun.">
        <title>Genomic and functional characteristics of novel human pancreatic 2P domain K(+) channels.</title>
        <authorList>
            <person name="Girard C."/>
            <person name="Duprat F."/>
            <person name="Terrenoire C."/>
            <person name="Tinel N."/>
            <person name="Fosset M."/>
            <person name="Romey G."/>
            <person name="Lazdunski M."/>
            <person name="Lesage F."/>
        </authorList>
    </citation>
    <scope>NUCLEOTIDE SEQUENCE [MRNA] (ISOFORM A)</scope>
    <scope>FUNCTION</scope>
    <scope>TRANSPORTER ACTIVITY</scope>
    <scope>ACTIVITY REGULATION</scope>
    <scope>TISSUE SPECIFICITY</scope>
    <source>
        <tissue>Pancreas</tissue>
    </source>
</reference>
<reference key="2">
    <citation type="journal article" date="2003" name="Am. J. Physiol.">
        <title>Functional properties of four splice variants of a human pancreatic tandem-pore K+ channel, TALK-1.</title>
        <authorList>
            <person name="Han J."/>
            <person name="Kang D."/>
            <person name="Kim D."/>
        </authorList>
    </citation>
    <scope>NUCLEOTIDE SEQUENCE [MRNA] (ISOFORMS B; C AND D)</scope>
    <scope>FUNCTION</scope>
    <scope>TRANSPORTER ACTIVITY</scope>
    <scope>ACTIVITY REGULATION</scope>
    <scope>TISSUE SPECIFICITY</scope>
    <scope>ALTERNATIVE SPLICING</scope>
    <scope>VARIANT HIS-301</scope>
</reference>
<reference key="3">
    <citation type="journal article" date="2008" name="Br. J. Pharmacol.">
        <title>Regulation of two-pore-domain (K2P) potassium leak channels by the tyrosine kinase inhibitor genistein.</title>
        <authorList>
            <person name="Gierten J."/>
            <person name="Ficker E."/>
            <person name="Bloehs R."/>
            <person name="Schlomer K."/>
            <person name="Kathofer S."/>
            <person name="Scholz E."/>
            <person name="Zitron E."/>
            <person name="Kiesecker C."/>
            <person name="Bauer A."/>
            <person name="Becker R."/>
            <person name="Katus H.A."/>
            <person name="Karle C.A."/>
            <person name="Thomas D."/>
        </authorList>
    </citation>
    <scope>NUCLEOTIDE SEQUENCE [MRNA] (ISOFORM B)</scope>
    <source>
        <tissue>Pancreas</tissue>
    </source>
</reference>
<reference key="4">
    <citation type="journal article" date="2003" name="Nature">
        <title>The DNA sequence and analysis of human chromosome 6.</title>
        <authorList>
            <person name="Mungall A.J."/>
            <person name="Palmer S.A."/>
            <person name="Sims S.K."/>
            <person name="Edwards C.A."/>
            <person name="Ashurst J.L."/>
            <person name="Wilming L."/>
            <person name="Jones M.C."/>
            <person name="Horton R."/>
            <person name="Hunt S.E."/>
            <person name="Scott C.E."/>
            <person name="Gilbert J.G.R."/>
            <person name="Clamp M.E."/>
            <person name="Bethel G."/>
            <person name="Milne S."/>
            <person name="Ainscough R."/>
            <person name="Almeida J.P."/>
            <person name="Ambrose K.D."/>
            <person name="Andrews T.D."/>
            <person name="Ashwell R.I.S."/>
            <person name="Babbage A.K."/>
            <person name="Bagguley C.L."/>
            <person name="Bailey J."/>
            <person name="Banerjee R."/>
            <person name="Barker D.J."/>
            <person name="Barlow K.F."/>
            <person name="Bates K."/>
            <person name="Beare D.M."/>
            <person name="Beasley H."/>
            <person name="Beasley O."/>
            <person name="Bird C.P."/>
            <person name="Blakey S.E."/>
            <person name="Bray-Allen S."/>
            <person name="Brook J."/>
            <person name="Brown A.J."/>
            <person name="Brown J.Y."/>
            <person name="Burford D.C."/>
            <person name="Burrill W."/>
            <person name="Burton J."/>
            <person name="Carder C."/>
            <person name="Carter N.P."/>
            <person name="Chapman J.C."/>
            <person name="Clark S.Y."/>
            <person name="Clark G."/>
            <person name="Clee C.M."/>
            <person name="Clegg S."/>
            <person name="Cobley V."/>
            <person name="Collier R.E."/>
            <person name="Collins J.E."/>
            <person name="Colman L.K."/>
            <person name="Corby N.R."/>
            <person name="Coville G.J."/>
            <person name="Culley K.M."/>
            <person name="Dhami P."/>
            <person name="Davies J."/>
            <person name="Dunn M."/>
            <person name="Earthrowl M.E."/>
            <person name="Ellington A.E."/>
            <person name="Evans K.A."/>
            <person name="Faulkner L."/>
            <person name="Francis M.D."/>
            <person name="Frankish A."/>
            <person name="Frankland J."/>
            <person name="French L."/>
            <person name="Garner P."/>
            <person name="Garnett J."/>
            <person name="Ghori M.J."/>
            <person name="Gilby L.M."/>
            <person name="Gillson C.J."/>
            <person name="Glithero R.J."/>
            <person name="Grafham D.V."/>
            <person name="Grant M."/>
            <person name="Gribble S."/>
            <person name="Griffiths C."/>
            <person name="Griffiths M.N.D."/>
            <person name="Hall R."/>
            <person name="Halls K.S."/>
            <person name="Hammond S."/>
            <person name="Harley J.L."/>
            <person name="Hart E.A."/>
            <person name="Heath P.D."/>
            <person name="Heathcott R."/>
            <person name="Holmes S.J."/>
            <person name="Howden P.J."/>
            <person name="Howe K.L."/>
            <person name="Howell G.R."/>
            <person name="Huckle E."/>
            <person name="Humphray S.J."/>
            <person name="Humphries M.D."/>
            <person name="Hunt A.R."/>
            <person name="Johnson C.M."/>
            <person name="Joy A.A."/>
            <person name="Kay M."/>
            <person name="Keenan S.J."/>
            <person name="Kimberley A.M."/>
            <person name="King A."/>
            <person name="Laird G.K."/>
            <person name="Langford C."/>
            <person name="Lawlor S."/>
            <person name="Leongamornlert D.A."/>
            <person name="Leversha M."/>
            <person name="Lloyd C.R."/>
            <person name="Lloyd D.M."/>
            <person name="Loveland J.E."/>
            <person name="Lovell J."/>
            <person name="Martin S."/>
            <person name="Mashreghi-Mohammadi M."/>
            <person name="Maslen G.L."/>
            <person name="Matthews L."/>
            <person name="McCann O.T."/>
            <person name="McLaren S.J."/>
            <person name="McLay K."/>
            <person name="McMurray A."/>
            <person name="Moore M.J.F."/>
            <person name="Mullikin J.C."/>
            <person name="Niblett D."/>
            <person name="Nickerson T."/>
            <person name="Novik K.L."/>
            <person name="Oliver K."/>
            <person name="Overton-Larty E.K."/>
            <person name="Parker A."/>
            <person name="Patel R."/>
            <person name="Pearce A.V."/>
            <person name="Peck A.I."/>
            <person name="Phillimore B.J.C.T."/>
            <person name="Phillips S."/>
            <person name="Plumb R.W."/>
            <person name="Porter K.M."/>
            <person name="Ramsey Y."/>
            <person name="Ranby S.A."/>
            <person name="Rice C.M."/>
            <person name="Ross M.T."/>
            <person name="Searle S.M."/>
            <person name="Sehra H.K."/>
            <person name="Sheridan E."/>
            <person name="Skuce C.D."/>
            <person name="Smith S."/>
            <person name="Smith M."/>
            <person name="Spraggon L."/>
            <person name="Squares S.L."/>
            <person name="Steward C.A."/>
            <person name="Sycamore N."/>
            <person name="Tamlyn-Hall G."/>
            <person name="Tester J."/>
            <person name="Theaker A.J."/>
            <person name="Thomas D.W."/>
            <person name="Thorpe A."/>
            <person name="Tracey A."/>
            <person name="Tromans A."/>
            <person name="Tubby B."/>
            <person name="Wall M."/>
            <person name="Wallis J.M."/>
            <person name="West A.P."/>
            <person name="White S.S."/>
            <person name="Whitehead S.L."/>
            <person name="Whittaker H."/>
            <person name="Wild A."/>
            <person name="Willey D.J."/>
            <person name="Wilmer T.E."/>
            <person name="Wood J.M."/>
            <person name="Wray P.W."/>
            <person name="Wyatt J.C."/>
            <person name="Young L."/>
            <person name="Younger R.M."/>
            <person name="Bentley D.R."/>
            <person name="Coulson A."/>
            <person name="Durbin R.M."/>
            <person name="Hubbard T."/>
            <person name="Sulston J.E."/>
            <person name="Dunham I."/>
            <person name="Rogers J."/>
            <person name="Beck S."/>
        </authorList>
    </citation>
    <scope>NUCLEOTIDE SEQUENCE [LARGE SCALE GENOMIC DNA]</scope>
</reference>
<reference key="5">
    <citation type="submission" date="2005-07" db="EMBL/GenBank/DDBJ databases">
        <authorList>
            <person name="Mural R.J."/>
            <person name="Istrail S."/>
            <person name="Sutton G."/>
            <person name="Florea L."/>
            <person name="Halpern A.L."/>
            <person name="Mobarry C.M."/>
            <person name="Lippert R."/>
            <person name="Walenz B."/>
            <person name="Shatkay H."/>
            <person name="Dew I."/>
            <person name="Miller J.R."/>
            <person name="Flanigan M.J."/>
            <person name="Edwards N.J."/>
            <person name="Bolanos R."/>
            <person name="Fasulo D."/>
            <person name="Halldorsson B.V."/>
            <person name="Hannenhalli S."/>
            <person name="Turner R."/>
            <person name="Yooseph S."/>
            <person name="Lu F."/>
            <person name="Nusskern D.R."/>
            <person name="Shue B.C."/>
            <person name="Zheng X.H."/>
            <person name="Zhong F."/>
            <person name="Delcher A.L."/>
            <person name="Huson D.H."/>
            <person name="Kravitz S.A."/>
            <person name="Mouchard L."/>
            <person name="Reinert K."/>
            <person name="Remington K.A."/>
            <person name="Clark A.G."/>
            <person name="Waterman M.S."/>
            <person name="Eichler E.E."/>
            <person name="Adams M.D."/>
            <person name="Hunkapiller M.W."/>
            <person name="Myers E.W."/>
            <person name="Venter J.C."/>
        </authorList>
    </citation>
    <scope>NUCLEOTIDE SEQUENCE [LARGE SCALE GENOMIC DNA]</scope>
    <scope>VARIANT HIS-301</scope>
</reference>
<reference key="6">
    <citation type="journal article" date="2004" name="Genome Res.">
        <title>The status, quality, and expansion of the NIH full-length cDNA project: the Mammalian Gene Collection (MGC).</title>
        <authorList>
            <consortium name="The MGC Project Team"/>
        </authorList>
    </citation>
    <scope>NUCLEOTIDE SEQUENCE [LARGE SCALE MRNA] (ISOFORM C)</scope>
</reference>
<reference key="7">
    <citation type="journal article" date="2004" name="Biochem. Biophys. Res. Commun.">
        <title>Single-channel properties and pH sensitivity of two-pore domain K+ channels of the TALK family.</title>
        <authorList>
            <person name="Kang D."/>
            <person name="Kim D."/>
        </authorList>
    </citation>
    <scope>FUNCTION</scope>
    <scope>TRANSPORTER ACTIVITY</scope>
    <scope>ACTIVITY REGULATION</scope>
    <scope>BIOPHYSICOCHEMICAL PROPERTIES</scope>
</reference>
<reference key="8">
    <citation type="journal article" date="2011" name="Nat. Genet.">
        <title>Meta-analysis of genome-wide association studies identifies eight new loci for type 2 diabetes in east Asians.</title>
        <authorList>
            <consortium name="DIAGRAM Consortium"/>
            <consortium name="MuTHER Consortium"/>
            <person name="Cho Y.S."/>
            <person name="Chen C.H."/>
            <person name="Hu C."/>
            <person name="Long J."/>
            <person name="Ong R.T."/>
            <person name="Sim X."/>
            <person name="Takeuchi F."/>
            <person name="Wu Y."/>
            <person name="Go M.J."/>
            <person name="Yamauchi T."/>
            <person name="Chang Y.C."/>
            <person name="Kwak S.H."/>
            <person name="Ma R.C."/>
            <person name="Yamamoto K."/>
            <person name="Adair L.S."/>
            <person name="Aung T."/>
            <person name="Cai Q."/>
            <person name="Chang L.C."/>
            <person name="Chen Y.T."/>
            <person name="Gao Y."/>
            <person name="Hu F.B."/>
            <person name="Kim H.L."/>
            <person name="Kim S."/>
            <person name="Kim Y.J."/>
            <person name="Lee J.J."/>
            <person name="Lee N.R."/>
            <person name="Li Y."/>
            <person name="Liu J.J."/>
            <person name="Lu W."/>
            <person name="Nakamura J."/>
            <person name="Nakashima E."/>
            <person name="Ng D.P."/>
            <person name="Tay W.T."/>
            <person name="Tsai F.J."/>
            <person name="Wong T.Y."/>
            <person name="Yokota M."/>
            <person name="Zheng W."/>
            <person name="Zhang R."/>
            <person name="Wang C."/>
            <person name="So W.Y."/>
            <person name="Ohnaka K."/>
            <person name="Ikegami H."/>
            <person name="Hara K."/>
            <person name="Cho Y.M."/>
            <person name="Cho N.H."/>
            <person name="Chang T.J."/>
            <person name="Bao Y."/>
            <person name="Hedman A.K."/>
            <person name="Morris A.P."/>
            <person name="McCarthy M.I."/>
            <person name="Takayanagi R."/>
            <person name="Park K.S."/>
            <person name="Jia W."/>
            <person name="Chuang L.M."/>
            <person name="Chan J.C."/>
            <person name="Maeda S."/>
            <person name="Kadowaki T."/>
            <person name="Lee J.Y."/>
            <person name="Wu J.Y."/>
            <person name="Teo Y.Y."/>
            <person name="Tai E.S."/>
            <person name="Shu X.O."/>
            <person name="Mohlke K.L."/>
            <person name="Kato N."/>
            <person name="Han B.G."/>
            <person name="Seielstad M."/>
        </authorList>
    </citation>
    <scope>VARIANT GLU-277</scope>
</reference>
<reference key="9">
    <citation type="journal article" date="2015" name="Diabetes">
        <title>Type 2 Diabetes-Associated K+ Channel TALK-1 Modulates beta-Cell Electrical Excitability, Second-Phase Insulin Secretion, and Glucose Homeostasis.</title>
        <authorList>
            <person name="Vierra N.C."/>
            <person name="Dadi P.K."/>
            <person name="Jeong I."/>
            <person name="Dickerson M."/>
            <person name="Powell D.R."/>
            <person name="Jacobson D.A."/>
        </authorList>
    </citation>
    <scope>FUNCTION</scope>
    <scope>TRANSPORTER ACTIVITY</scope>
    <scope>SUBCELLULAR LOCATION (ISOFORM A)</scope>
    <scope>MUTAGENESIS OF GLY-110</scope>
    <scope>CHARACTERIZATION OF VARIANT GLU-277</scope>
</reference>
<reference key="10">
    <citation type="journal article" date="2016" name="Cell">
        <title>A Non-canonical Voltage-Sensing Mechanism Controls Gating in K2P K(+) Channels.</title>
        <authorList>
            <person name="Schewe M."/>
            <person name="Nematian-Ardestani E."/>
            <person name="Sun H."/>
            <person name="Musinszki M."/>
            <person name="Cordeiro S."/>
            <person name="Bucci G."/>
            <person name="de Groot B.L."/>
            <person name="Tucker S.J."/>
            <person name="Rapedius M."/>
            <person name="Baukrowitz T."/>
        </authorList>
    </citation>
    <scope>FUNCTION</scope>
    <scope>TRANSPORTER ACTIVITY</scope>
    <scope>REACTION MECHANISM</scope>
</reference>
<reference key="11">
    <citation type="journal article" date="2017" name="Sci. Signal.">
        <title>TALK-1 channels control beta cell endoplasmic reticulum Ca2+ homeostasis.</title>
        <authorList>
            <person name="Vierra N.C."/>
            <person name="Dadi P.K."/>
            <person name="Milian S.C."/>
            <person name="Dickerson M.T."/>
            <person name="Jordan K.L."/>
            <person name="Gilon P."/>
            <person name="Jacobson D.A."/>
        </authorList>
    </citation>
    <scope>FUNCTION</scope>
    <scope>SUBCELLULAR LOCATION (ISOFORMS A AND B)</scope>
    <scope>TISSUE SPECIFICITY</scope>
    <scope>MUTAGENESIS OF GLY-110</scope>
    <scope>CHARACTERIZATION OF VARIANT GLU-277</scope>
</reference>
<reference key="12">
    <citation type="journal article" date="2018" name="Mol. Metab.">
        <title>TALK-1 reduces delta-cell endoplasmic reticulum and cytoplasmic calcium levels limiting somatostatin secretion.</title>
        <authorList>
            <person name="Vierra N.C."/>
            <person name="Dickerson M.T."/>
            <person name="Jordan K.L."/>
            <person name="Dadi P.K."/>
            <person name="Katdare K.A."/>
            <person name="Altman M.K."/>
            <person name="Milian S.C."/>
            <person name="Jacobson D.A."/>
        </authorList>
    </citation>
    <scope>FUNCTION</scope>
    <scope>TISSUE SPECIFICITY</scope>
</reference>
<reference key="13">
    <citation type="journal article" date="2018" name="Sci. Rep.">
        <title>Cytokine-mediated changes in K+ channel activity promotes an adaptive Ca2+ response that sustains beta-cell insulin secretion during inflammation.</title>
        <authorList>
            <person name="Dickerson M.T."/>
            <person name="Bogart A.M."/>
            <person name="Altman M.K."/>
            <person name="Milian S.C."/>
            <person name="Jordan K.L."/>
            <person name="Dadi P.K."/>
            <person name="Jacobson D.A."/>
        </authorList>
    </citation>
    <scope>INDUCTION</scope>
</reference>
<reference key="14">
    <citation type="journal article" date="2021" name="JCI Insight">
        <title>A KCNK16 mutation causing TALK-1 gain of function is associated with maturity-onset diabetes of the young.</title>
        <authorList>
            <person name="Graff S.M."/>
            <person name="Johnson S.R."/>
            <person name="Leo P.J."/>
            <person name="Dadi P.K."/>
            <person name="Dickerson M.T."/>
            <person name="Nakhe A.Y."/>
            <person name="McInerney-Leo A.M."/>
            <person name="Marshall M."/>
            <person name="Zaborska K.E."/>
            <person name="Schaub C.M."/>
            <person name="Brown M.A."/>
            <person name="Jacobson D.A."/>
            <person name="Duncan E.L."/>
        </authorList>
    </citation>
    <scope>FUNCTION</scope>
    <scope>TRANSPORTER ACTIVITY</scope>
    <scope>CHARACTERIZATION OF VARIANT PRO-114</scope>
</reference>
<reference key="15">
    <citation type="journal article" date="2022" name="J. Biol. Chem.">
        <title>Alkaline-sensitive two-pore domain potassium channels form functional heteromers in pancreatic beta-cells.</title>
        <authorList>
            <person name="Khoubza L."/>
            <person name="Gilbert N."/>
            <person name="Kim E.J."/>
            <person name="Chatelain F.C."/>
            <person name="Feliciangeli S."/>
            <person name="Abelanet S."/>
            <person name="Kang D."/>
            <person name="Lesage F."/>
            <person name="Bichet D."/>
        </authorList>
    </citation>
    <scope>FUNCTION</scope>
    <scope>TRANSPORTER ACTIVITY</scope>
    <scope>ACTIVITY REGULATION</scope>
    <scope>BIOPHYSICOCHEMICAL PROPERTIES</scope>
    <scope>SUBUNIT</scope>
    <scope>INTERACTION WITH KCNK17 AND KCNK5</scope>
    <scope>TISSUE SPECIFICITY</scope>
    <scope>MUTAGENESIS OF GLY-110</scope>
</reference>
<reference key="16">
    <citation type="journal article" date="2024" name="Cell Rep.">
        <title>TALK-1-mediated alterations of beta-cell mitochondrial function and insulin secretion impair glucose homeostasis on a diabetogenic diet.</title>
        <authorList>
            <person name="Graff S.M."/>
            <person name="Nakhe A.Y."/>
            <person name="Dadi P.K."/>
            <person name="Dickerson M.T."/>
            <person name="Dobson J.R."/>
            <person name="Zaborska K.E."/>
            <person name="Ibsen C.E."/>
            <person name="Butterworth R.B."/>
            <person name="Vierra N.C."/>
            <person name="Jacobson D.A."/>
        </authorList>
    </citation>
    <scope>SUBCELLULAR LOCATION</scope>
</reference>